<organism>
    <name type="scientific">Pectobacterium atrosepticum (strain SCRI 1043 / ATCC BAA-672)</name>
    <name type="common">Erwinia carotovora subsp. atroseptica</name>
    <dbReference type="NCBI Taxonomy" id="218491"/>
    <lineage>
        <taxon>Bacteria</taxon>
        <taxon>Pseudomonadati</taxon>
        <taxon>Pseudomonadota</taxon>
        <taxon>Gammaproteobacteria</taxon>
        <taxon>Enterobacterales</taxon>
        <taxon>Pectobacteriaceae</taxon>
        <taxon>Pectobacterium</taxon>
    </lineage>
</organism>
<sequence>MQLPHYSQLKQQQCRRDRRSLALLLAFLVLTLVVSLCAGERWIWPTAWLDDAQQLFVWQLRLPRTLAVMLVGASLAMSGTVMQAVFDNPLAEPGLLGVANGAGVALVLTVLLGQGLLPVWVLSLSAIAGALLITFLLLHFARRHISNTRLLLIGIALGIICSAVMTWAVYFSTSLDLRQLMYWMMGGFSGIDWRHGWLMLTLLPLLLWLSRQGTVLNGLTLGEIQARQLGIPVYRWRTVLVLVMGVQVGLSVALAGIIAFIGLIIPHMLRLCGLTDQRYLLTGCALAGGGVLLLADTVARVALNSAELPIGVVTATQGSPWFIWLLLRNRL</sequence>
<accession>Q6D656</accession>
<evidence type="ECO:0000255" key="1">
    <source>
        <dbReference type="HAMAP-Rule" id="MF_01004"/>
    </source>
</evidence>
<reference key="1">
    <citation type="journal article" date="2004" name="Proc. Natl. Acad. Sci. U.S.A.">
        <title>Genome sequence of the enterobacterial phytopathogen Erwinia carotovora subsp. atroseptica and characterization of virulence factors.</title>
        <authorList>
            <person name="Bell K.S."/>
            <person name="Sebaihia M."/>
            <person name="Pritchard L."/>
            <person name="Holden M.T.G."/>
            <person name="Hyman L.J."/>
            <person name="Holeva M.C."/>
            <person name="Thomson N.R."/>
            <person name="Bentley S.D."/>
            <person name="Churcher L.J.C."/>
            <person name="Mungall K."/>
            <person name="Atkin R."/>
            <person name="Bason N."/>
            <person name="Brooks K."/>
            <person name="Chillingworth T."/>
            <person name="Clark K."/>
            <person name="Doggett J."/>
            <person name="Fraser A."/>
            <person name="Hance Z."/>
            <person name="Hauser H."/>
            <person name="Jagels K."/>
            <person name="Moule S."/>
            <person name="Norbertczak H."/>
            <person name="Ormond D."/>
            <person name="Price C."/>
            <person name="Quail M.A."/>
            <person name="Sanders M."/>
            <person name="Walker D."/>
            <person name="Whitehead S."/>
            <person name="Salmond G.P.C."/>
            <person name="Birch P.R.J."/>
            <person name="Parkhill J."/>
            <person name="Toth I.K."/>
        </authorList>
    </citation>
    <scope>NUCLEOTIDE SEQUENCE [LARGE SCALE GENOMIC DNA]</scope>
    <source>
        <strain>SCRI 1043 / ATCC BAA-672</strain>
    </source>
</reference>
<proteinExistence type="inferred from homology"/>
<feature type="chain" id="PRO_0000059971" description="Vitamin B12 import system permease protein BtuC">
    <location>
        <begin position="1"/>
        <end position="331"/>
    </location>
</feature>
<feature type="transmembrane region" description="Helical" evidence="1">
    <location>
        <begin position="21"/>
        <end position="43"/>
    </location>
</feature>
<feature type="transmembrane region" description="Helical" evidence="1">
    <location>
        <begin position="63"/>
        <end position="85"/>
    </location>
</feature>
<feature type="transmembrane region" description="Helical" evidence="1">
    <location>
        <begin position="90"/>
        <end position="112"/>
    </location>
</feature>
<feature type="transmembrane region" description="Helical" evidence="1">
    <location>
        <begin position="116"/>
        <end position="138"/>
    </location>
</feature>
<feature type="transmembrane region" description="Helical" evidence="1">
    <location>
        <begin position="151"/>
        <end position="173"/>
    </location>
</feature>
<feature type="transmembrane region" description="Helical" evidence="1">
    <location>
        <begin position="193"/>
        <end position="210"/>
    </location>
</feature>
<feature type="transmembrane region" description="Helical" evidence="1">
    <location>
        <begin position="239"/>
        <end position="261"/>
    </location>
</feature>
<comment type="function">
    <text evidence="1">Part of the ABC transporter complex BtuCDF involved in vitamin B12 import. Involved in the translocation of the substrate across the membrane.</text>
</comment>
<comment type="subunit">
    <text evidence="1">The complex is composed of two ATP-binding proteins (BtuD), two transmembrane proteins (BtuC) and a solute-binding protein (BtuF).</text>
</comment>
<comment type="subcellular location">
    <subcellularLocation>
        <location evidence="1">Cell inner membrane</location>
        <topology evidence="1">Multi-pass membrane protein</topology>
    </subcellularLocation>
</comment>
<comment type="similarity">
    <text evidence="1">Belongs to the binding-protein-dependent transport system permease family. FecCD subfamily.</text>
</comment>
<name>BTUC_PECAS</name>
<keyword id="KW-0997">Cell inner membrane</keyword>
<keyword id="KW-1003">Cell membrane</keyword>
<keyword id="KW-0472">Membrane</keyword>
<keyword id="KW-1185">Reference proteome</keyword>
<keyword id="KW-0812">Transmembrane</keyword>
<keyword id="KW-1133">Transmembrane helix</keyword>
<keyword id="KW-0813">Transport</keyword>
<protein>
    <recommendedName>
        <fullName evidence="1">Vitamin B12 import system permease protein BtuC</fullName>
    </recommendedName>
</protein>
<gene>
    <name evidence="1" type="primary">btuC</name>
    <name type="ordered locus">ECA1832</name>
</gene>
<dbReference type="EMBL" id="BX950851">
    <property type="protein sequence ID" value="CAG74735.1"/>
    <property type="molecule type" value="Genomic_DNA"/>
</dbReference>
<dbReference type="SMR" id="Q6D656"/>
<dbReference type="STRING" id="218491.ECA1832"/>
<dbReference type="KEGG" id="eca:ECA1832"/>
<dbReference type="eggNOG" id="COG4139">
    <property type="taxonomic scope" value="Bacteria"/>
</dbReference>
<dbReference type="HOGENOM" id="CLU_013016_0_3_6"/>
<dbReference type="Proteomes" id="UP000007966">
    <property type="component" value="Chromosome"/>
</dbReference>
<dbReference type="GO" id="GO:0005886">
    <property type="term" value="C:plasma membrane"/>
    <property type="evidence" value="ECO:0007669"/>
    <property type="project" value="UniProtKB-SubCell"/>
</dbReference>
<dbReference type="GO" id="GO:0090482">
    <property type="term" value="F:vitamin transmembrane transporter activity"/>
    <property type="evidence" value="ECO:0007669"/>
    <property type="project" value="UniProtKB-UniRule"/>
</dbReference>
<dbReference type="GO" id="GO:0015889">
    <property type="term" value="P:cobalamin transport"/>
    <property type="evidence" value="ECO:0007669"/>
    <property type="project" value="UniProtKB-UniRule"/>
</dbReference>
<dbReference type="CDD" id="cd06550">
    <property type="entry name" value="TM_ABC_iron-siderophores_like"/>
    <property type="match status" value="1"/>
</dbReference>
<dbReference type="FunFam" id="1.10.3470.10:FF:000001">
    <property type="entry name" value="Vitamin B12 ABC transporter permease BtuC"/>
    <property type="match status" value="1"/>
</dbReference>
<dbReference type="Gene3D" id="1.10.3470.10">
    <property type="entry name" value="ABC transporter involved in vitamin B12 uptake, BtuC"/>
    <property type="match status" value="1"/>
</dbReference>
<dbReference type="HAMAP" id="MF_01004">
    <property type="entry name" value="BtuC"/>
    <property type="match status" value="1"/>
</dbReference>
<dbReference type="InterPro" id="IPR037294">
    <property type="entry name" value="ABC_BtuC-like"/>
</dbReference>
<dbReference type="InterPro" id="IPR023691">
    <property type="entry name" value="ABC_transptr_BtuC"/>
</dbReference>
<dbReference type="InterPro" id="IPR000522">
    <property type="entry name" value="ABC_transptr_permease_BtuC"/>
</dbReference>
<dbReference type="NCBIfam" id="NF003001">
    <property type="entry name" value="PRK03784.1"/>
    <property type="match status" value="1"/>
</dbReference>
<dbReference type="PANTHER" id="PTHR30472">
    <property type="entry name" value="FERRIC ENTEROBACTIN TRANSPORT SYSTEM PERMEASE PROTEIN"/>
    <property type="match status" value="1"/>
</dbReference>
<dbReference type="PANTHER" id="PTHR30472:SF29">
    <property type="entry name" value="VITAMIN B12 IMPORT SYSTEM PERMEASE PROTEIN BTUC"/>
    <property type="match status" value="1"/>
</dbReference>
<dbReference type="Pfam" id="PF01032">
    <property type="entry name" value="FecCD"/>
    <property type="match status" value="1"/>
</dbReference>
<dbReference type="SUPFAM" id="SSF81345">
    <property type="entry name" value="ABC transporter involved in vitamin B12 uptake, BtuC"/>
    <property type="match status" value="1"/>
</dbReference>